<keyword id="KW-0150">Chloroplast</keyword>
<keyword id="KW-1015">Disulfide bond</keyword>
<keyword id="KW-0249">Electron transport</keyword>
<keyword id="KW-0934">Plastid</keyword>
<keyword id="KW-0676">Redox-active center</keyword>
<keyword id="KW-1185">Reference proteome</keyword>
<keyword id="KW-0809">Transit peptide</keyword>
<keyword id="KW-0813">Transport</keyword>
<organism>
    <name type="scientific">Arabidopsis thaliana</name>
    <name type="common">Mouse-ear cress</name>
    <dbReference type="NCBI Taxonomy" id="3702"/>
    <lineage>
        <taxon>Eukaryota</taxon>
        <taxon>Viridiplantae</taxon>
        <taxon>Streptophyta</taxon>
        <taxon>Embryophyta</taxon>
        <taxon>Tracheophyta</taxon>
        <taxon>Spermatophyta</taxon>
        <taxon>Magnoliopsida</taxon>
        <taxon>eudicotyledons</taxon>
        <taxon>Gunneridae</taxon>
        <taxon>Pentapetalae</taxon>
        <taxon>rosids</taxon>
        <taxon>malvids</taxon>
        <taxon>Brassicales</taxon>
        <taxon>Brassicaceae</taxon>
        <taxon>Camelineae</taxon>
        <taxon>Arabidopsis</taxon>
    </lineage>
</organism>
<sequence>MDSIVSSSTILMRSYLTPPVRSCSPATSVSVKPLSSVQVTSVAANRHLLSLSSGARRTRKSSSSVIRCGGIKEIGESEFSSTVLESAQPVLVEFVATWCGPCKLIYPAMEALSQEYGDKLTIVKIDHDANPKLIAEFKVYGLPHFILFKDGKEVPGSRREGAITKAKLKEYIDGLLNSISVA</sequence>
<comment type="function">
    <text>Probable thiol-disulfide oxidoreductase that may participate in various redox reactions.</text>
</comment>
<comment type="subcellular location">
    <subcellularLocation>
        <location evidence="5">Plastid</location>
        <location evidence="5">Chloroplast stroma</location>
    </subcellularLocation>
</comment>
<comment type="tissue specificity">
    <text evidence="4">Predominantly expressed in leaves.</text>
</comment>
<comment type="similarity">
    <text evidence="6">Belongs to the thioredoxin family.</text>
</comment>
<comment type="sequence caution" evidence="6">
    <conflict type="erroneous initiation">
        <sequence resource="EMBL-CDS" id="AAF15952"/>
    </conflict>
    <text>Truncated N-terminus.</text>
</comment>
<name>TRXX_ARATH</name>
<evidence type="ECO:0000250" key="1"/>
<evidence type="ECO:0000255" key="2"/>
<evidence type="ECO:0000255" key="3">
    <source>
        <dbReference type="PROSITE-ProRule" id="PRU00691"/>
    </source>
</evidence>
<evidence type="ECO:0000269" key="4">
    <source>
    </source>
</evidence>
<evidence type="ECO:0000269" key="5">
    <source>
    </source>
</evidence>
<evidence type="ECO:0000305" key="6"/>
<gene>
    <name type="primary">ATHX</name>
    <name type="synonym">ATHP</name>
    <name type="ordered locus">At1g50320</name>
    <name type="ORF">F14I3.8</name>
</gene>
<protein>
    <recommendedName>
        <fullName>Thioredoxin X, chloroplastic</fullName>
        <shortName>AtTrxx</shortName>
    </recommendedName>
</protein>
<accession>Q8LD49</accession>
<accession>Q9SEU5</accession>
<accession>Q9SX49</accession>
<proteinExistence type="evidence at transcript level"/>
<reference key="1">
    <citation type="journal article" date="2000" name="Nature">
        <title>Sequence and analysis of chromosome 1 of the plant Arabidopsis thaliana.</title>
        <authorList>
            <person name="Theologis A."/>
            <person name="Ecker J.R."/>
            <person name="Palm C.J."/>
            <person name="Federspiel N.A."/>
            <person name="Kaul S."/>
            <person name="White O."/>
            <person name="Alonso J."/>
            <person name="Altafi H."/>
            <person name="Araujo R."/>
            <person name="Bowman C.L."/>
            <person name="Brooks S.Y."/>
            <person name="Buehler E."/>
            <person name="Chan A."/>
            <person name="Chao Q."/>
            <person name="Chen H."/>
            <person name="Cheuk R.F."/>
            <person name="Chin C.W."/>
            <person name="Chung M.K."/>
            <person name="Conn L."/>
            <person name="Conway A.B."/>
            <person name="Conway A.R."/>
            <person name="Creasy T.H."/>
            <person name="Dewar K."/>
            <person name="Dunn P."/>
            <person name="Etgu P."/>
            <person name="Feldblyum T.V."/>
            <person name="Feng J.-D."/>
            <person name="Fong B."/>
            <person name="Fujii C.Y."/>
            <person name="Gill J.E."/>
            <person name="Goldsmith A.D."/>
            <person name="Haas B."/>
            <person name="Hansen N.F."/>
            <person name="Hughes B."/>
            <person name="Huizar L."/>
            <person name="Hunter J.L."/>
            <person name="Jenkins J."/>
            <person name="Johnson-Hopson C."/>
            <person name="Khan S."/>
            <person name="Khaykin E."/>
            <person name="Kim C.J."/>
            <person name="Koo H.L."/>
            <person name="Kremenetskaia I."/>
            <person name="Kurtz D.B."/>
            <person name="Kwan A."/>
            <person name="Lam B."/>
            <person name="Langin-Hooper S."/>
            <person name="Lee A."/>
            <person name="Lee J.M."/>
            <person name="Lenz C.A."/>
            <person name="Li J.H."/>
            <person name="Li Y.-P."/>
            <person name="Lin X."/>
            <person name="Liu S.X."/>
            <person name="Liu Z.A."/>
            <person name="Luros J.S."/>
            <person name="Maiti R."/>
            <person name="Marziali A."/>
            <person name="Militscher J."/>
            <person name="Miranda M."/>
            <person name="Nguyen M."/>
            <person name="Nierman W.C."/>
            <person name="Osborne B.I."/>
            <person name="Pai G."/>
            <person name="Peterson J."/>
            <person name="Pham P.K."/>
            <person name="Rizzo M."/>
            <person name="Rooney T."/>
            <person name="Rowley D."/>
            <person name="Sakano H."/>
            <person name="Salzberg S.L."/>
            <person name="Schwartz J.R."/>
            <person name="Shinn P."/>
            <person name="Southwick A.M."/>
            <person name="Sun H."/>
            <person name="Tallon L.J."/>
            <person name="Tambunga G."/>
            <person name="Toriumi M.J."/>
            <person name="Town C.D."/>
            <person name="Utterback T."/>
            <person name="Van Aken S."/>
            <person name="Vaysberg M."/>
            <person name="Vysotskaia V.S."/>
            <person name="Walker M."/>
            <person name="Wu D."/>
            <person name="Yu G."/>
            <person name="Fraser C.M."/>
            <person name="Venter J.C."/>
            <person name="Davis R.W."/>
        </authorList>
    </citation>
    <scope>NUCLEOTIDE SEQUENCE [LARGE SCALE GENOMIC DNA]</scope>
    <source>
        <strain>cv. Columbia</strain>
    </source>
</reference>
<reference key="2">
    <citation type="journal article" date="2017" name="Plant J.">
        <title>Araport11: a complete reannotation of the Arabidopsis thaliana reference genome.</title>
        <authorList>
            <person name="Cheng C.Y."/>
            <person name="Krishnakumar V."/>
            <person name="Chan A.P."/>
            <person name="Thibaud-Nissen F."/>
            <person name="Schobel S."/>
            <person name="Town C.D."/>
        </authorList>
    </citation>
    <scope>GENOME REANNOTATION</scope>
    <source>
        <strain>cv. Columbia</strain>
    </source>
</reference>
<reference key="3">
    <citation type="journal article" date="2003" name="Science">
        <title>Empirical analysis of transcriptional activity in the Arabidopsis genome.</title>
        <authorList>
            <person name="Yamada K."/>
            <person name="Lim J."/>
            <person name="Dale J.M."/>
            <person name="Chen H."/>
            <person name="Shinn P."/>
            <person name="Palm C.J."/>
            <person name="Southwick A.M."/>
            <person name="Wu H.C."/>
            <person name="Kim C.J."/>
            <person name="Nguyen M."/>
            <person name="Pham P.K."/>
            <person name="Cheuk R.F."/>
            <person name="Karlin-Newmann G."/>
            <person name="Liu S.X."/>
            <person name="Lam B."/>
            <person name="Sakano H."/>
            <person name="Wu T."/>
            <person name="Yu G."/>
            <person name="Miranda M."/>
            <person name="Quach H.L."/>
            <person name="Tripp M."/>
            <person name="Chang C.H."/>
            <person name="Lee J.M."/>
            <person name="Toriumi M.J."/>
            <person name="Chan M.M."/>
            <person name="Tang C.C."/>
            <person name="Onodera C.S."/>
            <person name="Deng J.M."/>
            <person name="Akiyama K."/>
            <person name="Ansari Y."/>
            <person name="Arakawa T."/>
            <person name="Banh J."/>
            <person name="Banno F."/>
            <person name="Bowser L."/>
            <person name="Brooks S.Y."/>
            <person name="Carninci P."/>
            <person name="Chao Q."/>
            <person name="Choy N."/>
            <person name="Enju A."/>
            <person name="Goldsmith A.D."/>
            <person name="Gurjal M."/>
            <person name="Hansen N.F."/>
            <person name="Hayashizaki Y."/>
            <person name="Johnson-Hopson C."/>
            <person name="Hsuan V.W."/>
            <person name="Iida K."/>
            <person name="Karnes M."/>
            <person name="Khan S."/>
            <person name="Koesema E."/>
            <person name="Ishida J."/>
            <person name="Jiang P.X."/>
            <person name="Jones T."/>
            <person name="Kawai J."/>
            <person name="Kamiya A."/>
            <person name="Meyers C."/>
            <person name="Nakajima M."/>
            <person name="Narusaka M."/>
            <person name="Seki M."/>
            <person name="Sakurai T."/>
            <person name="Satou M."/>
            <person name="Tamse R."/>
            <person name="Vaysberg M."/>
            <person name="Wallender E.K."/>
            <person name="Wong C."/>
            <person name="Yamamura Y."/>
            <person name="Yuan S."/>
            <person name="Shinozaki K."/>
            <person name="Davis R.W."/>
            <person name="Theologis A."/>
            <person name="Ecker J.R."/>
        </authorList>
    </citation>
    <scope>NUCLEOTIDE SEQUENCE [LARGE SCALE MRNA]</scope>
    <source>
        <strain>cv. Columbia</strain>
    </source>
</reference>
<reference key="4">
    <citation type="submission" date="2002-03" db="EMBL/GenBank/DDBJ databases">
        <title>Full-length cDNA from Arabidopsis thaliana.</title>
        <authorList>
            <person name="Brover V.V."/>
            <person name="Troukhan M.E."/>
            <person name="Alexandrov N.A."/>
            <person name="Lu Y.-P."/>
            <person name="Flavell R.B."/>
            <person name="Feldmann K.A."/>
        </authorList>
    </citation>
    <scope>NUCLEOTIDE SEQUENCE [LARGE SCALE MRNA]</scope>
</reference>
<reference key="5">
    <citation type="journal article" date="1999" name="Gene">
        <title>The Arabidopsis thaliana genome encodes at least four thioredoxins m and a new prokaryotic-like thioredoxin.</title>
        <authorList>
            <person name="Mestres-Ortega D."/>
            <person name="Meyer Y."/>
        </authorList>
    </citation>
    <scope>NUCLEOTIDE SEQUENCE [MRNA] OF 6-182</scope>
    <scope>TISSUE SPECIFICITY</scope>
</reference>
<reference key="6">
    <citation type="journal article" date="2009" name="Mol. Plant">
        <title>Comparative genomic study of the thioredoxin family in photosynthetic organisms with emphasis on Populus trichocarpa.</title>
        <authorList>
            <person name="Chibani K."/>
            <person name="Wingsle G."/>
            <person name="Jacquot J.P."/>
            <person name="Gelhaye E."/>
            <person name="Rouhier N."/>
        </authorList>
    </citation>
    <scope>GENE FAMILY</scope>
    <scope>NOMENCLATURE</scope>
</reference>
<reference key="7">
    <citation type="journal article" date="2009" name="Plant Mol. Biol.">
        <title>A novel extended family of stromal thioredoxins.</title>
        <authorList>
            <person name="Cain P."/>
            <person name="Hall M."/>
            <person name="Schroder W.P."/>
            <person name="Kieselbach T."/>
            <person name="Robinson C."/>
        </authorList>
    </citation>
    <scope>SUBCELLULAR LOCATION</scope>
</reference>
<feature type="transit peptide" description="Chloroplast" evidence="2">
    <location>
        <begin position="1"/>
        <end position="67"/>
    </location>
</feature>
<feature type="chain" id="PRO_0000034166" description="Thioredoxin X, chloroplastic">
    <location>
        <begin position="68"/>
        <end position="182"/>
    </location>
</feature>
<feature type="domain" description="Thioredoxin" evidence="3">
    <location>
        <begin position="68"/>
        <end position="177"/>
    </location>
</feature>
<feature type="active site" description="Nucleophile" evidence="1">
    <location>
        <position position="99"/>
    </location>
</feature>
<feature type="active site" description="Nucleophile" evidence="1">
    <location>
        <position position="102"/>
    </location>
</feature>
<feature type="site" description="Contributes to redox potential value" evidence="1">
    <location>
        <position position="100"/>
    </location>
</feature>
<feature type="site" description="Contributes to redox potential value" evidence="1">
    <location>
        <position position="101"/>
    </location>
</feature>
<feature type="disulfide bond" description="Redox-active" evidence="3">
    <location>
        <begin position="99"/>
        <end position="102"/>
    </location>
</feature>
<feature type="sequence conflict" description="In Ref. 4; AAM64283." evidence="6" ref="4">
    <location>
        <position position="117"/>
    </location>
</feature>
<dbReference type="EMBL" id="AC007980">
    <property type="protein sequence ID" value="AAD50039.1"/>
    <property type="molecule type" value="Genomic_DNA"/>
</dbReference>
<dbReference type="EMBL" id="CP002684">
    <property type="protein sequence ID" value="AEE32536.1"/>
    <property type="molecule type" value="Genomic_DNA"/>
</dbReference>
<dbReference type="EMBL" id="AF324698">
    <property type="protein sequence ID" value="AAG40049.1"/>
    <property type="molecule type" value="mRNA"/>
</dbReference>
<dbReference type="EMBL" id="AF326860">
    <property type="protein sequence ID" value="AAG41442.1"/>
    <property type="molecule type" value="mRNA"/>
</dbReference>
<dbReference type="EMBL" id="AF339683">
    <property type="protein sequence ID" value="AAK00365.1"/>
    <property type="molecule type" value="mRNA"/>
</dbReference>
<dbReference type="EMBL" id="AF386924">
    <property type="protein sequence ID" value="AAK62369.1"/>
    <property type="molecule type" value="mRNA"/>
</dbReference>
<dbReference type="EMBL" id="BT000355">
    <property type="protein sequence ID" value="AAN15674.1"/>
    <property type="molecule type" value="mRNA"/>
</dbReference>
<dbReference type="EMBL" id="AY086205">
    <property type="protein sequence ID" value="AAM64283.1"/>
    <property type="molecule type" value="mRNA"/>
</dbReference>
<dbReference type="EMBL" id="AF095753">
    <property type="protein sequence ID" value="AAF15952.1"/>
    <property type="status" value="ALT_INIT"/>
    <property type="molecule type" value="mRNA"/>
</dbReference>
<dbReference type="PIR" id="E96539">
    <property type="entry name" value="E96539"/>
</dbReference>
<dbReference type="RefSeq" id="NP_564566.1">
    <property type="nucleotide sequence ID" value="NM_103916.3"/>
</dbReference>
<dbReference type="SMR" id="Q8LD49"/>
<dbReference type="BioGRID" id="26679">
    <property type="interactions" value="4"/>
</dbReference>
<dbReference type="FunCoup" id="Q8LD49">
    <property type="interactions" value="801"/>
</dbReference>
<dbReference type="IntAct" id="Q8LD49">
    <property type="interactions" value="2"/>
</dbReference>
<dbReference type="MINT" id="Q8LD49"/>
<dbReference type="STRING" id="3702.Q8LD49"/>
<dbReference type="iPTMnet" id="Q8LD49"/>
<dbReference type="PaxDb" id="3702-AT1G50320.1"/>
<dbReference type="ProteomicsDB" id="234647"/>
<dbReference type="EnsemblPlants" id="AT1G50320.1">
    <property type="protein sequence ID" value="AT1G50320.1"/>
    <property type="gene ID" value="AT1G50320"/>
</dbReference>
<dbReference type="GeneID" id="841454"/>
<dbReference type="Gramene" id="AT1G50320.1">
    <property type="protein sequence ID" value="AT1G50320.1"/>
    <property type="gene ID" value="AT1G50320"/>
</dbReference>
<dbReference type="KEGG" id="ath:AT1G50320"/>
<dbReference type="Araport" id="AT1G50320"/>
<dbReference type="TAIR" id="AT1G50320">
    <property type="gene designation" value="THX"/>
</dbReference>
<dbReference type="eggNOG" id="KOG0910">
    <property type="taxonomic scope" value="Eukaryota"/>
</dbReference>
<dbReference type="HOGENOM" id="CLU_090389_0_3_1"/>
<dbReference type="InParanoid" id="Q8LD49"/>
<dbReference type="OMA" id="ASTIRCG"/>
<dbReference type="OrthoDB" id="19690at2759"/>
<dbReference type="PhylomeDB" id="Q8LD49"/>
<dbReference type="PRO" id="PR:Q8LD49"/>
<dbReference type="Proteomes" id="UP000006548">
    <property type="component" value="Chromosome 1"/>
</dbReference>
<dbReference type="ExpressionAtlas" id="Q8LD49">
    <property type="expression patterns" value="baseline and differential"/>
</dbReference>
<dbReference type="GO" id="GO:0009507">
    <property type="term" value="C:chloroplast"/>
    <property type="evidence" value="ECO:0007005"/>
    <property type="project" value="TAIR"/>
</dbReference>
<dbReference type="GO" id="GO:0009570">
    <property type="term" value="C:chloroplast stroma"/>
    <property type="evidence" value="ECO:0000314"/>
    <property type="project" value="TAIR"/>
</dbReference>
<dbReference type="GO" id="GO:0008047">
    <property type="term" value="F:enzyme activator activity"/>
    <property type="evidence" value="ECO:0000314"/>
    <property type="project" value="TAIR"/>
</dbReference>
<dbReference type="GO" id="GO:0043085">
    <property type="term" value="P:positive regulation of catalytic activity"/>
    <property type="evidence" value="ECO:0000314"/>
    <property type="project" value="TAIR"/>
</dbReference>
<dbReference type="CDD" id="cd02947">
    <property type="entry name" value="TRX_family"/>
    <property type="match status" value="1"/>
</dbReference>
<dbReference type="FunFam" id="3.40.30.10:FF:000001">
    <property type="entry name" value="Thioredoxin"/>
    <property type="match status" value="1"/>
</dbReference>
<dbReference type="Gene3D" id="3.40.30.10">
    <property type="entry name" value="Glutaredoxin"/>
    <property type="match status" value="1"/>
</dbReference>
<dbReference type="InterPro" id="IPR036249">
    <property type="entry name" value="Thioredoxin-like_sf"/>
</dbReference>
<dbReference type="InterPro" id="IPR013766">
    <property type="entry name" value="Thioredoxin_domain"/>
</dbReference>
<dbReference type="PANTHER" id="PTHR45663">
    <property type="entry name" value="GEO12009P1"/>
    <property type="match status" value="1"/>
</dbReference>
<dbReference type="PANTHER" id="PTHR45663:SF22">
    <property type="entry name" value="THIOREDOXIN X, CHLOROPLASTIC"/>
    <property type="match status" value="1"/>
</dbReference>
<dbReference type="Pfam" id="PF00085">
    <property type="entry name" value="Thioredoxin"/>
    <property type="match status" value="1"/>
</dbReference>
<dbReference type="PRINTS" id="PR00421">
    <property type="entry name" value="THIOREDOXIN"/>
</dbReference>
<dbReference type="SUPFAM" id="SSF52833">
    <property type="entry name" value="Thioredoxin-like"/>
    <property type="match status" value="1"/>
</dbReference>
<dbReference type="PROSITE" id="PS51352">
    <property type="entry name" value="THIOREDOXIN_2"/>
    <property type="match status" value="1"/>
</dbReference>